<accession>P27336</accession>
<organism>
    <name type="scientific">Lily symptomless virus</name>
    <name type="common">LSV</name>
    <dbReference type="NCBI Taxonomy" id="12173"/>
    <lineage>
        <taxon>Viruses</taxon>
        <taxon>Riboviria</taxon>
        <taxon>Orthornavirae</taxon>
        <taxon>Kitrinoviricota</taxon>
        <taxon>Alsuviricetes</taxon>
        <taxon>Tymovirales</taxon>
        <taxon>Betaflexiviridae</taxon>
        <taxon>Quinvirinae</taxon>
        <taxon>Carlavirus</taxon>
    </lineage>
</organism>
<sequence length="140" mass="16121">MSVWGAWKPNTPVGYKELKSSEIIDTQIMDEALKRRTTIVLCLLSAFPRDICRDILRRTSSHIVGLGRSRYARRRRALQIGRCERCYRVYPPVCGSKCDNKTCRPGLSINTNVANYIDHGVTEVIPWISPHRGQFYLRPK</sequence>
<evidence type="ECO:0000250" key="1"/>
<evidence type="ECO:0000255" key="2"/>
<evidence type="ECO:0000305" key="3"/>
<reference key="1">
    <citation type="journal article" date="1990" name="J. Gen. Virol.">
        <title>Homologies between the genomes of a carlavirus (lily symptomless virus) and a potexvirus (lily virus X) from lily plants.</title>
        <authorList>
            <person name="Memelink J."/>
            <person name="van der Vlugt C.I.M."/>
            <person name="Linthorst H.J.M."/>
            <person name="Derks A.F.L.M."/>
            <person name="Asjes C.J."/>
            <person name="Bol J.F."/>
        </authorList>
    </citation>
    <scope>NUCLEOTIDE SEQUENCE [GENOMIC RNA]</scope>
</reference>
<feature type="chain" id="PRO_0000222653" description="RNA silencing suppressor">
    <location>
        <begin position="1"/>
        <end position="140"/>
    </location>
</feature>
<feature type="zinc finger region" description="C4-type" evidence="2">
    <location>
        <begin position="83"/>
        <end position="103"/>
    </location>
</feature>
<feature type="zinc finger region" description="C4-type" evidence="2">
    <location>
        <begin position="83"/>
        <end position="98"/>
    </location>
</feature>
<feature type="region of interest" description="Basic" evidence="1">
    <location>
        <begin position="73"/>
        <end position="76"/>
    </location>
</feature>
<keyword id="KW-0238">DNA-binding</keyword>
<keyword id="KW-0945">Host-virus interaction</keyword>
<keyword id="KW-1090">Inhibition of host innate immune response by virus</keyword>
<keyword id="KW-0479">Metal-binding</keyword>
<keyword id="KW-0941">Suppressor of RNA silencing</keyword>
<keyword id="KW-0899">Viral immunoevasion</keyword>
<keyword id="KW-0862">Zinc</keyword>
<keyword id="KW-0863">Zinc-finger</keyword>
<proteinExistence type="inferred from homology"/>
<organismHost>
    <name type="scientific">Lilium</name>
    <dbReference type="NCBI Taxonomy" id="4688"/>
</organismHost>
<comment type="function">
    <text evidence="1">Suppressor of viral-induced RNA silencing. The potential mechanism of action is based on sequestering siRNAs (By similarity).</text>
</comment>
<comment type="similarity">
    <text evidence="3">Belongs to the carlaviruses nucleic acid-binding protein family.</text>
</comment>
<dbReference type="EMBL" id="X15343">
    <property type="protein sequence ID" value="CAA33402.1"/>
    <property type="molecule type" value="Genomic_RNA"/>
</dbReference>
<dbReference type="GO" id="GO:0003677">
    <property type="term" value="F:DNA binding"/>
    <property type="evidence" value="ECO:0007669"/>
    <property type="project" value="UniProtKB-KW"/>
</dbReference>
<dbReference type="GO" id="GO:0008270">
    <property type="term" value="F:zinc ion binding"/>
    <property type="evidence" value="ECO:0007669"/>
    <property type="project" value="UniProtKB-KW"/>
</dbReference>
<dbReference type="GO" id="GO:0006355">
    <property type="term" value="P:regulation of DNA-templated transcription"/>
    <property type="evidence" value="ECO:0007669"/>
    <property type="project" value="InterPro"/>
</dbReference>
<dbReference type="GO" id="GO:0052170">
    <property type="term" value="P:symbiont-mediated suppression of host innate immune response"/>
    <property type="evidence" value="ECO:0007669"/>
    <property type="project" value="UniProtKB-KW"/>
</dbReference>
<dbReference type="InterPro" id="IPR002568">
    <property type="entry name" value="Carla-bd"/>
</dbReference>
<dbReference type="Pfam" id="PF01623">
    <property type="entry name" value="Carla_C4"/>
    <property type="match status" value="1"/>
</dbReference>
<name>VSR_LSV</name>
<protein>
    <recommendedName>
        <fullName>RNA silencing suppressor</fullName>
    </recommendedName>
    <alternativeName>
        <fullName>16 kDa protein</fullName>
    </alternativeName>
    <alternativeName>
        <fullName>ORF6 protein</fullName>
    </alternativeName>
    <alternativeName>
        <fullName>Putative nucleic acid-binding protein</fullName>
    </alternativeName>
</protein>